<organism>
    <name type="scientific">Rubrivivax gelatinosus (strain NBRC 100245 / IL144)</name>
    <dbReference type="NCBI Taxonomy" id="983917"/>
    <lineage>
        <taxon>Bacteria</taxon>
        <taxon>Pseudomonadati</taxon>
        <taxon>Pseudomonadota</taxon>
        <taxon>Betaproteobacteria</taxon>
        <taxon>Burkholderiales</taxon>
        <taxon>Sphaerotilaceae</taxon>
        <taxon>Rubrivivax</taxon>
    </lineage>
</organism>
<gene>
    <name evidence="1" type="primary">carA</name>
    <name type="ordered locus">RGE_33300</name>
</gene>
<proteinExistence type="inferred from homology"/>
<sequence length="384" mass="40702">MLPVLPPALLALADGTTFLGTSIGAPGRTVGEVVFNTALTGYQEILTDPSYCRQIVTLTYPHIGNVGVNEEDVEAAKVHAAGLVIKDLPLRVSNFRAAMPLSQYLEREGTVAIAGIDTRRLTRVLRTTGAQNGCIVSFAPGTVVGEAEIAAAVAAAKAAPSMAGLDLAQVVSADAPYEWTETSWQLGRGHGTLADAEFHVVAYDFGVKRNILRLLADRGCRVTVVPARTPAAEVFKLKPDGVFLSNGPGDPEPCDYAIAAAREIIDAGVPTFGICLGHQIMALASGAKTFKMKFGHHGANHPVKDLDSGRVSITSQNHGFAVDEKTLGANLRPTHVSLFDGTLQGLARTDRPAFCFQGHPEASPGPHDIGYLFDRFVALMQERA</sequence>
<reference key="1">
    <citation type="journal article" date="2001" name="J. Mol. Evol.">
        <title>Horizontal transfer of the photosynthesis gene cluster and operon rearrangement in purple bacteria.</title>
        <authorList>
            <person name="Igarashi N."/>
            <person name="Harada J."/>
            <person name="Nagashima S."/>
            <person name="Matsuura K."/>
            <person name="Shimada K."/>
            <person name="Nagashima K.V.P."/>
        </authorList>
    </citation>
    <scope>NUCLEOTIDE SEQUENCE [GENOMIC DNA]</scope>
    <source>
        <strain>NBRC 100245 / IL144</strain>
    </source>
</reference>
<reference key="2">
    <citation type="journal article" date="2012" name="J. Bacteriol.">
        <title>Complete genome sequence of phototrophic betaproteobacterium Rubrivivax gelatinosus IL144.</title>
        <authorList>
            <person name="Nagashima S."/>
            <person name="Kamimura A."/>
            <person name="Shimizu T."/>
            <person name="Nakamura-Isaki S."/>
            <person name="Aono E."/>
            <person name="Sakamoto K."/>
            <person name="Ichikawa N."/>
            <person name="Nakazawa H."/>
            <person name="Sekine M."/>
            <person name="Yamazaki S."/>
            <person name="Fujita N."/>
            <person name="Shimada K."/>
            <person name="Hanada S."/>
            <person name="Nagashima K.V."/>
        </authorList>
    </citation>
    <scope>NUCLEOTIDE SEQUENCE [LARGE SCALE GENOMIC DNA]</scope>
    <source>
        <strain>NBRC 100245 / IL144</strain>
    </source>
</reference>
<comment type="function">
    <text evidence="1">Small subunit of the glutamine-dependent carbamoyl phosphate synthetase (CPSase). CPSase catalyzes the formation of carbamoyl phosphate from the ammonia moiety of glutamine, carbonate, and phosphate donated by ATP, constituting the first step of 2 biosynthetic pathways, one leading to arginine and/or urea and the other to pyrimidine nucleotides. The small subunit (glutamine amidotransferase) binds and cleaves glutamine to supply the large subunit with the substrate ammonia.</text>
</comment>
<comment type="catalytic activity">
    <reaction evidence="1">
        <text>hydrogencarbonate + L-glutamine + 2 ATP + H2O = carbamoyl phosphate + L-glutamate + 2 ADP + phosphate + 2 H(+)</text>
        <dbReference type="Rhea" id="RHEA:18633"/>
        <dbReference type="ChEBI" id="CHEBI:15377"/>
        <dbReference type="ChEBI" id="CHEBI:15378"/>
        <dbReference type="ChEBI" id="CHEBI:17544"/>
        <dbReference type="ChEBI" id="CHEBI:29985"/>
        <dbReference type="ChEBI" id="CHEBI:30616"/>
        <dbReference type="ChEBI" id="CHEBI:43474"/>
        <dbReference type="ChEBI" id="CHEBI:58228"/>
        <dbReference type="ChEBI" id="CHEBI:58359"/>
        <dbReference type="ChEBI" id="CHEBI:456216"/>
        <dbReference type="EC" id="6.3.5.5"/>
    </reaction>
</comment>
<comment type="catalytic activity">
    <molecule>Carbamoyl phosphate synthase small chain</molecule>
    <reaction evidence="1">
        <text>L-glutamine + H2O = L-glutamate + NH4(+)</text>
        <dbReference type="Rhea" id="RHEA:15889"/>
        <dbReference type="ChEBI" id="CHEBI:15377"/>
        <dbReference type="ChEBI" id="CHEBI:28938"/>
        <dbReference type="ChEBI" id="CHEBI:29985"/>
        <dbReference type="ChEBI" id="CHEBI:58359"/>
    </reaction>
</comment>
<comment type="pathway">
    <text evidence="1">Amino-acid biosynthesis; L-arginine biosynthesis; carbamoyl phosphate from bicarbonate: step 1/1.</text>
</comment>
<comment type="pathway">
    <text evidence="1">Pyrimidine metabolism; UMP biosynthesis via de novo pathway; (S)-dihydroorotate from bicarbonate: step 1/3.</text>
</comment>
<comment type="subunit">
    <text evidence="1">Composed of two chains; the small (or glutamine) chain promotes the hydrolysis of glutamine to ammonia, which is used by the large (or ammonia) chain to synthesize carbamoyl phosphate. Tetramer of heterodimers (alpha,beta)4.</text>
</comment>
<comment type="similarity">
    <text evidence="1">Belongs to the CarA family.</text>
</comment>
<accession>Q9JP87</accession>
<accession>I0HUI2</accession>
<name>CARA_RUBGI</name>
<protein>
    <recommendedName>
        <fullName evidence="1">Carbamoyl phosphate synthase small chain</fullName>
        <ecNumber evidence="1">6.3.5.5</ecNumber>
    </recommendedName>
    <alternativeName>
        <fullName evidence="1">Carbamoyl phosphate synthetase glutamine chain</fullName>
    </alternativeName>
</protein>
<feature type="chain" id="PRO_0000112311" description="Carbamoyl phosphate synthase small chain">
    <location>
        <begin position="1"/>
        <end position="384"/>
    </location>
</feature>
<feature type="domain" description="Glutamine amidotransferase type-1" evidence="1">
    <location>
        <begin position="199"/>
        <end position="384"/>
    </location>
</feature>
<feature type="region of interest" description="CPSase" evidence="1">
    <location>
        <begin position="1"/>
        <end position="195"/>
    </location>
</feature>
<feature type="active site" description="Nucleophile" evidence="1">
    <location>
        <position position="275"/>
    </location>
</feature>
<feature type="active site" evidence="1">
    <location>
        <position position="359"/>
    </location>
</feature>
<feature type="active site" evidence="1">
    <location>
        <position position="361"/>
    </location>
</feature>
<feature type="binding site" evidence="1">
    <location>
        <position position="50"/>
    </location>
    <ligand>
        <name>L-glutamine</name>
        <dbReference type="ChEBI" id="CHEBI:58359"/>
    </ligand>
</feature>
<feature type="binding site" evidence="1">
    <location>
        <position position="247"/>
    </location>
    <ligand>
        <name>L-glutamine</name>
        <dbReference type="ChEBI" id="CHEBI:58359"/>
    </ligand>
</feature>
<feature type="binding site" evidence="1">
    <location>
        <position position="249"/>
    </location>
    <ligand>
        <name>L-glutamine</name>
        <dbReference type="ChEBI" id="CHEBI:58359"/>
    </ligand>
</feature>
<feature type="binding site" evidence="1">
    <location>
        <position position="276"/>
    </location>
    <ligand>
        <name>L-glutamine</name>
        <dbReference type="ChEBI" id="CHEBI:58359"/>
    </ligand>
</feature>
<feature type="binding site" evidence="1">
    <location>
        <position position="279"/>
    </location>
    <ligand>
        <name>L-glutamine</name>
        <dbReference type="ChEBI" id="CHEBI:58359"/>
    </ligand>
</feature>
<feature type="binding site" evidence="1">
    <location>
        <position position="317"/>
    </location>
    <ligand>
        <name>L-glutamine</name>
        <dbReference type="ChEBI" id="CHEBI:58359"/>
    </ligand>
</feature>
<feature type="binding site" evidence="1">
    <location>
        <position position="319"/>
    </location>
    <ligand>
        <name>L-glutamine</name>
        <dbReference type="ChEBI" id="CHEBI:58359"/>
    </ligand>
</feature>
<feature type="binding site" evidence="1">
    <location>
        <position position="320"/>
    </location>
    <ligand>
        <name>L-glutamine</name>
        <dbReference type="ChEBI" id="CHEBI:58359"/>
    </ligand>
</feature>
<evidence type="ECO:0000255" key="1">
    <source>
        <dbReference type="HAMAP-Rule" id="MF_01209"/>
    </source>
</evidence>
<keyword id="KW-0028">Amino-acid biosynthesis</keyword>
<keyword id="KW-0055">Arginine biosynthesis</keyword>
<keyword id="KW-0067">ATP-binding</keyword>
<keyword id="KW-0315">Glutamine amidotransferase</keyword>
<keyword id="KW-0436">Ligase</keyword>
<keyword id="KW-0547">Nucleotide-binding</keyword>
<keyword id="KW-0665">Pyrimidine biosynthesis</keyword>
<keyword id="KW-1185">Reference proteome</keyword>
<dbReference type="EC" id="6.3.5.5" evidence="1"/>
<dbReference type="EMBL" id="AB034704">
    <property type="protein sequence ID" value="BAA94074.1"/>
    <property type="molecule type" value="Genomic_DNA"/>
</dbReference>
<dbReference type="EMBL" id="AP012320">
    <property type="protein sequence ID" value="BAL96669.1"/>
    <property type="molecule type" value="Genomic_DNA"/>
</dbReference>
<dbReference type="PIR" id="T50921">
    <property type="entry name" value="T50921"/>
</dbReference>
<dbReference type="RefSeq" id="WP_014429530.1">
    <property type="nucleotide sequence ID" value="NC_017075.1"/>
</dbReference>
<dbReference type="SMR" id="Q9JP87"/>
<dbReference type="STRING" id="983917.RGE_33300"/>
<dbReference type="KEGG" id="rge:RGE_33300"/>
<dbReference type="PATRIC" id="fig|983917.3.peg.3253"/>
<dbReference type="eggNOG" id="COG0505">
    <property type="taxonomic scope" value="Bacteria"/>
</dbReference>
<dbReference type="HOGENOM" id="CLU_035901_2_1_4"/>
<dbReference type="UniPathway" id="UPA00068">
    <property type="reaction ID" value="UER00171"/>
</dbReference>
<dbReference type="UniPathway" id="UPA00070">
    <property type="reaction ID" value="UER00115"/>
</dbReference>
<dbReference type="Proteomes" id="UP000007883">
    <property type="component" value="Chromosome"/>
</dbReference>
<dbReference type="GO" id="GO:0005524">
    <property type="term" value="F:ATP binding"/>
    <property type="evidence" value="ECO:0007669"/>
    <property type="project" value="UniProtKB-UniRule"/>
</dbReference>
<dbReference type="GO" id="GO:0004088">
    <property type="term" value="F:carbamoyl-phosphate synthase (glutamine-hydrolyzing) activity"/>
    <property type="evidence" value="ECO:0007669"/>
    <property type="project" value="UniProtKB-UniRule"/>
</dbReference>
<dbReference type="GO" id="GO:0004359">
    <property type="term" value="F:glutaminase activity"/>
    <property type="evidence" value="ECO:0007669"/>
    <property type="project" value="RHEA"/>
</dbReference>
<dbReference type="GO" id="GO:0006207">
    <property type="term" value="P:'de novo' pyrimidine nucleobase biosynthetic process"/>
    <property type="evidence" value="ECO:0007669"/>
    <property type="project" value="InterPro"/>
</dbReference>
<dbReference type="GO" id="GO:0044205">
    <property type="term" value="P:'de novo' UMP biosynthetic process"/>
    <property type="evidence" value="ECO:0007669"/>
    <property type="project" value="UniProtKB-UniRule"/>
</dbReference>
<dbReference type="GO" id="GO:0006541">
    <property type="term" value="P:glutamine metabolic process"/>
    <property type="evidence" value="ECO:0007669"/>
    <property type="project" value="InterPro"/>
</dbReference>
<dbReference type="GO" id="GO:0006526">
    <property type="term" value="P:L-arginine biosynthetic process"/>
    <property type="evidence" value="ECO:0007669"/>
    <property type="project" value="UniProtKB-UniRule"/>
</dbReference>
<dbReference type="CDD" id="cd01744">
    <property type="entry name" value="GATase1_CPSase"/>
    <property type="match status" value="1"/>
</dbReference>
<dbReference type="FunFam" id="3.40.50.880:FF:000011">
    <property type="entry name" value="Carbamoyl-phosphate synthase small chain"/>
    <property type="match status" value="1"/>
</dbReference>
<dbReference type="FunFam" id="3.50.30.20:FF:000001">
    <property type="entry name" value="Carbamoyl-phosphate synthase small chain"/>
    <property type="match status" value="1"/>
</dbReference>
<dbReference type="Gene3D" id="3.40.50.880">
    <property type="match status" value="1"/>
</dbReference>
<dbReference type="Gene3D" id="3.50.30.20">
    <property type="entry name" value="Carbamoyl-phosphate synthase small subunit, N-terminal domain"/>
    <property type="match status" value="1"/>
</dbReference>
<dbReference type="HAMAP" id="MF_01209">
    <property type="entry name" value="CPSase_S_chain"/>
    <property type="match status" value="1"/>
</dbReference>
<dbReference type="InterPro" id="IPR050472">
    <property type="entry name" value="Anth_synth/Amidotransfase"/>
</dbReference>
<dbReference type="InterPro" id="IPR006274">
    <property type="entry name" value="CarbamoylP_synth_ssu"/>
</dbReference>
<dbReference type="InterPro" id="IPR002474">
    <property type="entry name" value="CarbamoylP_synth_ssu_N"/>
</dbReference>
<dbReference type="InterPro" id="IPR036480">
    <property type="entry name" value="CarbP_synth_ssu_N_sf"/>
</dbReference>
<dbReference type="InterPro" id="IPR029062">
    <property type="entry name" value="Class_I_gatase-like"/>
</dbReference>
<dbReference type="InterPro" id="IPR035686">
    <property type="entry name" value="CPSase_GATase1"/>
</dbReference>
<dbReference type="InterPro" id="IPR017926">
    <property type="entry name" value="GATASE"/>
</dbReference>
<dbReference type="NCBIfam" id="TIGR01368">
    <property type="entry name" value="CPSaseIIsmall"/>
    <property type="match status" value="1"/>
</dbReference>
<dbReference type="NCBIfam" id="NF009475">
    <property type="entry name" value="PRK12838.1"/>
    <property type="match status" value="1"/>
</dbReference>
<dbReference type="PANTHER" id="PTHR43418:SF7">
    <property type="entry name" value="CARBAMOYL-PHOSPHATE SYNTHASE SMALL CHAIN"/>
    <property type="match status" value="1"/>
</dbReference>
<dbReference type="PANTHER" id="PTHR43418">
    <property type="entry name" value="MULTIFUNCTIONAL TRYPTOPHAN BIOSYNTHESIS PROTEIN-RELATED"/>
    <property type="match status" value="1"/>
</dbReference>
<dbReference type="Pfam" id="PF00988">
    <property type="entry name" value="CPSase_sm_chain"/>
    <property type="match status" value="1"/>
</dbReference>
<dbReference type="Pfam" id="PF00117">
    <property type="entry name" value="GATase"/>
    <property type="match status" value="1"/>
</dbReference>
<dbReference type="PRINTS" id="PR00099">
    <property type="entry name" value="CPSGATASE"/>
</dbReference>
<dbReference type="PRINTS" id="PR00096">
    <property type="entry name" value="GATASE"/>
</dbReference>
<dbReference type="SMART" id="SM01097">
    <property type="entry name" value="CPSase_sm_chain"/>
    <property type="match status" value="1"/>
</dbReference>
<dbReference type="SUPFAM" id="SSF52021">
    <property type="entry name" value="Carbamoyl phosphate synthetase, small subunit N-terminal domain"/>
    <property type="match status" value="1"/>
</dbReference>
<dbReference type="SUPFAM" id="SSF52317">
    <property type="entry name" value="Class I glutamine amidotransferase-like"/>
    <property type="match status" value="1"/>
</dbReference>
<dbReference type="PROSITE" id="PS51273">
    <property type="entry name" value="GATASE_TYPE_1"/>
    <property type="match status" value="1"/>
</dbReference>